<keyword id="KW-0121">Carboxypeptidase</keyword>
<keyword id="KW-1015">Disulfide bond</keyword>
<keyword id="KW-0378">Hydrolase</keyword>
<keyword id="KW-0479">Metal-binding</keyword>
<keyword id="KW-0482">Metalloprotease</keyword>
<keyword id="KW-0645">Protease</keyword>
<keyword id="KW-1185">Reference proteome</keyword>
<keyword id="KW-0964">Secreted</keyword>
<keyword id="KW-0732">Signal</keyword>
<keyword id="KW-0843">Virulence</keyword>
<keyword id="KW-0862">Zinc</keyword>
<keyword id="KW-0865">Zymogen</keyword>
<name>MCPA_ARTBC</name>
<reference key="1">
    <citation type="journal article" date="2011" name="Genome Biol.">
        <title>Comparative and functional genomics provide insights into the pathogenicity of dermatophytic fungi.</title>
        <authorList>
            <person name="Burmester A."/>
            <person name="Shelest E."/>
            <person name="Gloeckner G."/>
            <person name="Heddergott C."/>
            <person name="Schindler S."/>
            <person name="Staib P."/>
            <person name="Heidel A."/>
            <person name="Felder M."/>
            <person name="Petzold A."/>
            <person name="Szafranski K."/>
            <person name="Feuermann M."/>
            <person name="Pedruzzi I."/>
            <person name="Priebe S."/>
            <person name="Groth M."/>
            <person name="Winkler R."/>
            <person name="Li W."/>
            <person name="Kniemeyer O."/>
            <person name="Schroeckh V."/>
            <person name="Hertweck C."/>
            <person name="Hube B."/>
            <person name="White T.C."/>
            <person name="Platzer M."/>
            <person name="Guthke R."/>
            <person name="Heitman J."/>
            <person name="Woestemeyer J."/>
            <person name="Zipfel P.F."/>
            <person name="Monod M."/>
            <person name="Brakhage A.A."/>
        </authorList>
    </citation>
    <scope>NUCLEOTIDE SEQUENCE [LARGE SCALE GENOMIC DNA]</scope>
    <scope>IDENTIFICATION BY MASS SPECTROMETRY</scope>
    <scope>SUBCELLULAR LOCATION</scope>
    <source>
        <strain>ATCC MYA-4681 / CBS 112371</strain>
    </source>
</reference>
<reference key="2">
    <citation type="journal article" date="2010" name="Microbiology">
        <title>Differential gene expression in the pathogenic dermatophyte Arthroderma benhamiae in vitro versus during infection.</title>
        <authorList>
            <person name="Staib P."/>
            <person name="Zaugg C."/>
            <person name="Mignon B."/>
            <person name="Weber J."/>
            <person name="Grumbt M."/>
            <person name="Pradervand S."/>
            <person name="Harshman K."/>
            <person name="Monod M."/>
        </authorList>
    </citation>
    <scope>INDUCTION</scope>
</reference>
<feature type="signal peptide" evidence="2">
    <location>
        <begin position="1"/>
        <end position="17"/>
    </location>
</feature>
<feature type="propeptide" id="PRO_0000398175" description="Activation peptide" evidence="1">
    <location>
        <begin position="18"/>
        <end position="112"/>
    </location>
</feature>
<feature type="chain" id="PRO_0000398176" description="Probable metallocarboxypeptidase A">
    <location>
        <begin position="113"/>
        <end position="422"/>
    </location>
</feature>
<feature type="domain" description="Peptidase M14" evidence="3">
    <location>
        <begin position="119"/>
        <end position="419"/>
    </location>
</feature>
<feature type="active site" description="Proton donor/acceptor" evidence="3">
    <location>
        <position position="385"/>
    </location>
</feature>
<feature type="binding site" evidence="1">
    <location>
        <begin position="179"/>
        <end position="182"/>
    </location>
    <ligand>
        <name>substrate</name>
    </ligand>
</feature>
<feature type="binding site" evidence="3">
    <location>
        <position position="179"/>
    </location>
    <ligand>
        <name>Zn(2+)</name>
        <dbReference type="ChEBI" id="CHEBI:29105"/>
        <note>catalytic</note>
    </ligand>
</feature>
<feature type="binding site" evidence="3">
    <location>
        <position position="182"/>
    </location>
    <ligand>
        <name>Zn(2+)</name>
        <dbReference type="ChEBI" id="CHEBI:29105"/>
        <note>catalytic</note>
    </ligand>
</feature>
<feature type="binding site" evidence="1">
    <location>
        <position position="237"/>
    </location>
    <ligand>
        <name>substrate</name>
    </ligand>
</feature>
<feature type="binding site" evidence="1">
    <location>
        <begin position="254"/>
        <end position="255"/>
    </location>
    <ligand>
        <name>substrate</name>
    </ligand>
</feature>
<feature type="binding site" evidence="3">
    <location>
        <position position="309"/>
    </location>
    <ligand>
        <name>Zn(2+)</name>
        <dbReference type="ChEBI" id="CHEBI:29105"/>
        <note>catalytic</note>
    </ligand>
</feature>
<feature type="binding site" evidence="1">
    <location>
        <begin position="310"/>
        <end position="311"/>
    </location>
    <ligand>
        <name>substrate</name>
    </ligand>
</feature>
<feature type="disulfide bond" evidence="1">
    <location>
        <begin position="248"/>
        <end position="271"/>
    </location>
</feature>
<evidence type="ECO:0000250" key="1"/>
<evidence type="ECO:0000255" key="2"/>
<evidence type="ECO:0000255" key="3">
    <source>
        <dbReference type="PROSITE-ProRule" id="PRU01379"/>
    </source>
</evidence>
<evidence type="ECO:0000269" key="4">
    <source>
    </source>
</evidence>
<evidence type="ECO:0000269" key="5">
    <source>
    </source>
</evidence>
<evidence type="ECO:0000305" key="6"/>
<comment type="function">
    <text evidence="1">Extracellular metalloprotease that contributes to pathogenicity.</text>
</comment>
<comment type="cofactor">
    <cofactor evidence="1">
        <name>Zn(2+)</name>
        <dbReference type="ChEBI" id="CHEBI:29105"/>
    </cofactor>
    <text evidence="1">Binds 1 zinc ion per subunit.</text>
</comment>
<comment type="subcellular location">
    <subcellularLocation>
        <location evidence="5">Secreted</location>
    </subcellularLocation>
</comment>
<comment type="induction">
    <text evidence="4">Expression is up-regulated during infection.</text>
</comment>
<comment type="similarity">
    <text evidence="6">Belongs to the peptidase M14 family.</text>
</comment>
<comment type="sequence caution" evidence="6">
    <conflict type="erroneous gene model prediction">
        <sequence resource="EMBL-CDS" id="EFE34075"/>
    </conflict>
    <text>ARB_07026 and ARB_07027 have been merged into one gene ARB_07026/ARB_07027.</text>
</comment>
<comment type="sequence caution" evidence="6">
    <conflict type="erroneous gene model prediction">
        <sequence resource="EMBL-CDS" id="EFE34076"/>
    </conflict>
    <text>ARB_07026 and ARB_07027 have been merged into one gene ARB_07026/ARB_07027.</text>
</comment>
<dbReference type="EC" id="3.4.17.-"/>
<dbReference type="EMBL" id="ABSU01000007">
    <property type="protein sequence ID" value="EFE34075.1"/>
    <property type="status" value="ALT_SEQ"/>
    <property type="molecule type" value="Genomic_DNA"/>
</dbReference>
<dbReference type="EMBL" id="ABSU01000007">
    <property type="protein sequence ID" value="EFE34076.1"/>
    <property type="status" value="ALT_SEQ"/>
    <property type="molecule type" value="Genomic_DNA"/>
</dbReference>
<dbReference type="RefSeq" id="XP_003014464.1">
    <property type="nucleotide sequence ID" value="XM_003014418.1"/>
</dbReference>
<dbReference type="RefSeq" id="XP_003014465.1">
    <property type="nucleotide sequence ID" value="XM_003014419.1"/>
</dbReference>
<dbReference type="SMR" id="D4AS12"/>
<dbReference type="MEROPS" id="M14.014"/>
<dbReference type="KEGG" id="abe:ARB_07026"/>
<dbReference type="KEGG" id="abe:ARB_07027"/>
<dbReference type="eggNOG" id="KOG2650">
    <property type="taxonomic scope" value="Eukaryota"/>
</dbReference>
<dbReference type="HOGENOM" id="CLU_1937617_0_0_1"/>
<dbReference type="OrthoDB" id="3626597at2759"/>
<dbReference type="Proteomes" id="UP000008866">
    <property type="component" value="Unassembled WGS sequence"/>
</dbReference>
<dbReference type="GO" id="GO:0005576">
    <property type="term" value="C:extracellular region"/>
    <property type="evidence" value="ECO:0007669"/>
    <property type="project" value="UniProtKB-SubCell"/>
</dbReference>
<dbReference type="GO" id="GO:0004181">
    <property type="term" value="F:metallocarboxypeptidase activity"/>
    <property type="evidence" value="ECO:0007669"/>
    <property type="project" value="InterPro"/>
</dbReference>
<dbReference type="GO" id="GO:0008270">
    <property type="term" value="F:zinc ion binding"/>
    <property type="evidence" value="ECO:0007669"/>
    <property type="project" value="InterPro"/>
</dbReference>
<dbReference type="GO" id="GO:0006508">
    <property type="term" value="P:proteolysis"/>
    <property type="evidence" value="ECO:0007669"/>
    <property type="project" value="UniProtKB-KW"/>
</dbReference>
<dbReference type="CDD" id="cd03860">
    <property type="entry name" value="M14_CP_A-B_like"/>
    <property type="match status" value="1"/>
</dbReference>
<dbReference type="FunFam" id="3.40.630.10:FF:000040">
    <property type="entry name" value="zinc carboxypeptidase"/>
    <property type="match status" value="1"/>
</dbReference>
<dbReference type="Gene3D" id="3.30.70.340">
    <property type="entry name" value="Metallocarboxypeptidase-like"/>
    <property type="match status" value="1"/>
</dbReference>
<dbReference type="Gene3D" id="3.40.630.10">
    <property type="entry name" value="Zn peptidases"/>
    <property type="match status" value="1"/>
</dbReference>
<dbReference type="InterPro" id="IPR036990">
    <property type="entry name" value="M14A-like_propep"/>
</dbReference>
<dbReference type="InterPro" id="IPR003146">
    <property type="entry name" value="M14A_act_pep"/>
</dbReference>
<dbReference type="InterPro" id="IPR000834">
    <property type="entry name" value="Peptidase_M14"/>
</dbReference>
<dbReference type="PANTHER" id="PTHR11705">
    <property type="entry name" value="PROTEASE FAMILY M14 CARBOXYPEPTIDASE A,B"/>
    <property type="match status" value="1"/>
</dbReference>
<dbReference type="PANTHER" id="PTHR11705:SF143">
    <property type="entry name" value="SLL0236 PROTEIN"/>
    <property type="match status" value="1"/>
</dbReference>
<dbReference type="Pfam" id="PF00246">
    <property type="entry name" value="Peptidase_M14"/>
    <property type="match status" value="1"/>
</dbReference>
<dbReference type="Pfam" id="PF02244">
    <property type="entry name" value="Propep_M14"/>
    <property type="match status" value="1"/>
</dbReference>
<dbReference type="PRINTS" id="PR00765">
    <property type="entry name" value="CRBOXYPTASEA"/>
</dbReference>
<dbReference type="SMART" id="SM00631">
    <property type="entry name" value="Zn_pept"/>
    <property type="match status" value="1"/>
</dbReference>
<dbReference type="SUPFAM" id="SSF54897">
    <property type="entry name" value="Protease propeptides/inhibitors"/>
    <property type="match status" value="1"/>
</dbReference>
<dbReference type="SUPFAM" id="SSF53187">
    <property type="entry name" value="Zn-dependent exopeptidases"/>
    <property type="match status" value="1"/>
</dbReference>
<dbReference type="PROSITE" id="PS00132">
    <property type="entry name" value="CARBOXYPEPT_ZN_1"/>
    <property type="match status" value="1"/>
</dbReference>
<dbReference type="PROSITE" id="PS52035">
    <property type="entry name" value="PEPTIDASE_M14"/>
    <property type="match status" value="1"/>
</dbReference>
<protein>
    <recommendedName>
        <fullName>Probable metallocarboxypeptidase A</fullName>
        <shortName>MCPA</shortName>
        <ecNumber>3.4.17.-</ecNumber>
    </recommendedName>
    <alternativeName>
        <fullName>Carboxypeptidase M14A</fullName>
    </alternativeName>
</protein>
<organism>
    <name type="scientific">Arthroderma benhamiae (strain ATCC MYA-4681 / CBS 112371)</name>
    <name type="common">Trichophyton mentagrophytes</name>
    <dbReference type="NCBI Taxonomy" id="663331"/>
    <lineage>
        <taxon>Eukaryota</taxon>
        <taxon>Fungi</taxon>
        <taxon>Dikarya</taxon>
        <taxon>Ascomycota</taxon>
        <taxon>Pezizomycotina</taxon>
        <taxon>Eurotiomycetes</taxon>
        <taxon>Eurotiomycetidae</taxon>
        <taxon>Onygenales</taxon>
        <taxon>Arthrodermataceae</taxon>
        <taxon>Trichophyton</taxon>
    </lineage>
</organism>
<accession>D4AS12</accession>
<accession>D4AS11</accession>
<sequence length="422" mass="47104">MRSVLSLALLAANVVTAAVVAPFDYSGYKVIRVPTQKDNVKEVQRIITDLNLDTWKYPKSEGQNADIVVPPSQISSFMERISGMNIEMMHEDLGLSIRNETSFEAYSAGYAPDINWFKSYHSYQDHLSYLQDLQGLFRTRSEYVDAGKSHEGRTIPALHIWGSGGKNSKPAIIFHGTIHAREWITTMVTEYMAWSFLSQYNKNADITSIVDNFDIWIFPIVNPDGFAFTQTSNRLWRKNRQPNPNARCPGRDLNRNYPYQWVGPGSSSNPCSDTYRGAQPGDGTEIKVHIANMKKIAANKGIAMFVDWHSYGQLFMSPYGYSCTARPPTDARHQELSRIFAQALKAVHGTPYKTGPICNTIYQVNGDSVDYALEVLKVKLSLTAELRDTGARGFVLPADQIIPSGEETLAGTVAMLKAVIQG</sequence>
<proteinExistence type="evidence at protein level"/>
<gene>
    <name type="primary">MCPA</name>
    <name type="ORF">ARB_07026/ARB_07027</name>
</gene>